<accession>A1S214</accession>
<gene>
    <name evidence="1" type="primary">rpsG</name>
    <name type="ordered locus">Sama_0209</name>
</gene>
<keyword id="KW-1185">Reference proteome</keyword>
<keyword id="KW-0687">Ribonucleoprotein</keyword>
<keyword id="KW-0689">Ribosomal protein</keyword>
<keyword id="KW-0694">RNA-binding</keyword>
<keyword id="KW-0699">rRNA-binding</keyword>
<keyword id="KW-0820">tRNA-binding</keyword>
<name>RS7_SHEAM</name>
<feature type="chain" id="PRO_1000014281" description="Small ribosomal subunit protein uS7">
    <location>
        <begin position="1"/>
        <end position="156"/>
    </location>
</feature>
<evidence type="ECO:0000255" key="1">
    <source>
        <dbReference type="HAMAP-Rule" id="MF_00480"/>
    </source>
</evidence>
<evidence type="ECO:0000305" key="2"/>
<dbReference type="EMBL" id="CP000507">
    <property type="protein sequence ID" value="ABL98420.1"/>
    <property type="molecule type" value="Genomic_DNA"/>
</dbReference>
<dbReference type="RefSeq" id="WP_011758331.1">
    <property type="nucleotide sequence ID" value="NC_008700.1"/>
</dbReference>
<dbReference type="SMR" id="A1S214"/>
<dbReference type="STRING" id="326297.Sama_0209"/>
<dbReference type="KEGG" id="saz:Sama_0209"/>
<dbReference type="eggNOG" id="COG0049">
    <property type="taxonomic scope" value="Bacteria"/>
</dbReference>
<dbReference type="HOGENOM" id="CLU_072226_1_1_6"/>
<dbReference type="OrthoDB" id="9807653at2"/>
<dbReference type="Proteomes" id="UP000009175">
    <property type="component" value="Chromosome"/>
</dbReference>
<dbReference type="GO" id="GO:0015935">
    <property type="term" value="C:small ribosomal subunit"/>
    <property type="evidence" value="ECO:0007669"/>
    <property type="project" value="InterPro"/>
</dbReference>
<dbReference type="GO" id="GO:0019843">
    <property type="term" value="F:rRNA binding"/>
    <property type="evidence" value="ECO:0007669"/>
    <property type="project" value="UniProtKB-UniRule"/>
</dbReference>
<dbReference type="GO" id="GO:0003735">
    <property type="term" value="F:structural constituent of ribosome"/>
    <property type="evidence" value="ECO:0007669"/>
    <property type="project" value="InterPro"/>
</dbReference>
<dbReference type="GO" id="GO:0000049">
    <property type="term" value="F:tRNA binding"/>
    <property type="evidence" value="ECO:0007669"/>
    <property type="project" value="UniProtKB-UniRule"/>
</dbReference>
<dbReference type="GO" id="GO:0006412">
    <property type="term" value="P:translation"/>
    <property type="evidence" value="ECO:0007669"/>
    <property type="project" value="UniProtKB-UniRule"/>
</dbReference>
<dbReference type="CDD" id="cd14869">
    <property type="entry name" value="uS7_Bacteria"/>
    <property type="match status" value="1"/>
</dbReference>
<dbReference type="FunFam" id="1.10.455.10:FF:000001">
    <property type="entry name" value="30S ribosomal protein S7"/>
    <property type="match status" value="1"/>
</dbReference>
<dbReference type="Gene3D" id="1.10.455.10">
    <property type="entry name" value="Ribosomal protein S7 domain"/>
    <property type="match status" value="1"/>
</dbReference>
<dbReference type="HAMAP" id="MF_00480_B">
    <property type="entry name" value="Ribosomal_uS7_B"/>
    <property type="match status" value="1"/>
</dbReference>
<dbReference type="InterPro" id="IPR000235">
    <property type="entry name" value="Ribosomal_uS7"/>
</dbReference>
<dbReference type="InterPro" id="IPR005717">
    <property type="entry name" value="Ribosomal_uS7_bac/org-type"/>
</dbReference>
<dbReference type="InterPro" id="IPR020606">
    <property type="entry name" value="Ribosomal_uS7_CS"/>
</dbReference>
<dbReference type="InterPro" id="IPR023798">
    <property type="entry name" value="Ribosomal_uS7_dom"/>
</dbReference>
<dbReference type="InterPro" id="IPR036823">
    <property type="entry name" value="Ribosomal_uS7_dom_sf"/>
</dbReference>
<dbReference type="NCBIfam" id="TIGR01029">
    <property type="entry name" value="rpsG_bact"/>
    <property type="match status" value="1"/>
</dbReference>
<dbReference type="PANTHER" id="PTHR11205">
    <property type="entry name" value="RIBOSOMAL PROTEIN S7"/>
    <property type="match status" value="1"/>
</dbReference>
<dbReference type="Pfam" id="PF00177">
    <property type="entry name" value="Ribosomal_S7"/>
    <property type="match status" value="1"/>
</dbReference>
<dbReference type="PIRSF" id="PIRSF002122">
    <property type="entry name" value="RPS7p_RPS7a_RPS5e_RPS7o"/>
    <property type="match status" value="1"/>
</dbReference>
<dbReference type="SUPFAM" id="SSF47973">
    <property type="entry name" value="Ribosomal protein S7"/>
    <property type="match status" value="1"/>
</dbReference>
<dbReference type="PROSITE" id="PS00052">
    <property type="entry name" value="RIBOSOMAL_S7"/>
    <property type="match status" value="1"/>
</dbReference>
<protein>
    <recommendedName>
        <fullName evidence="1">Small ribosomal subunit protein uS7</fullName>
    </recommendedName>
    <alternativeName>
        <fullName evidence="2">30S ribosomal protein S7</fullName>
    </alternativeName>
</protein>
<sequence>MPRRRVVGQRKILPDPKFNSELLAKFINVIMQDGKKSVAEKIIYKALDVVAEKKGEDHLVVLEAALDNVRPSVEVKSRRVGGSTYQVPCEVRPVRRNALAMRWLVEAARKRGEKSMALRLAGEMLDASDNKGTAVKKREDVHRMAEANKAFAHYRW</sequence>
<comment type="function">
    <text evidence="1">One of the primary rRNA binding proteins, it binds directly to 16S rRNA where it nucleates assembly of the head domain of the 30S subunit. Is located at the subunit interface close to the decoding center, probably blocks exit of the E-site tRNA.</text>
</comment>
<comment type="subunit">
    <text evidence="1">Part of the 30S ribosomal subunit. Contacts proteins S9 and S11.</text>
</comment>
<comment type="similarity">
    <text evidence="1">Belongs to the universal ribosomal protein uS7 family.</text>
</comment>
<organism>
    <name type="scientific">Shewanella amazonensis (strain ATCC BAA-1098 / SB2B)</name>
    <dbReference type="NCBI Taxonomy" id="326297"/>
    <lineage>
        <taxon>Bacteria</taxon>
        <taxon>Pseudomonadati</taxon>
        <taxon>Pseudomonadota</taxon>
        <taxon>Gammaproteobacteria</taxon>
        <taxon>Alteromonadales</taxon>
        <taxon>Shewanellaceae</taxon>
        <taxon>Shewanella</taxon>
    </lineage>
</organism>
<reference key="1">
    <citation type="submission" date="2006-12" db="EMBL/GenBank/DDBJ databases">
        <title>Complete sequence of Shewanella amazonensis SB2B.</title>
        <authorList>
            <consortium name="US DOE Joint Genome Institute"/>
            <person name="Copeland A."/>
            <person name="Lucas S."/>
            <person name="Lapidus A."/>
            <person name="Barry K."/>
            <person name="Detter J.C."/>
            <person name="Glavina del Rio T."/>
            <person name="Hammon N."/>
            <person name="Israni S."/>
            <person name="Dalin E."/>
            <person name="Tice H."/>
            <person name="Pitluck S."/>
            <person name="Munk A.C."/>
            <person name="Brettin T."/>
            <person name="Bruce D."/>
            <person name="Han C."/>
            <person name="Tapia R."/>
            <person name="Gilna P."/>
            <person name="Schmutz J."/>
            <person name="Larimer F."/>
            <person name="Land M."/>
            <person name="Hauser L."/>
            <person name="Kyrpides N."/>
            <person name="Mikhailova N."/>
            <person name="Fredrickson J."/>
            <person name="Richardson P."/>
        </authorList>
    </citation>
    <scope>NUCLEOTIDE SEQUENCE [LARGE SCALE GENOMIC DNA]</scope>
    <source>
        <strain>ATCC BAA-1098 / SB2B</strain>
    </source>
</reference>
<proteinExistence type="inferred from homology"/>